<name>NANE_STAAC</name>
<reference key="1">
    <citation type="journal article" date="2005" name="J. Bacteriol.">
        <title>Insights on evolution of virulence and resistance from the complete genome analysis of an early methicillin-resistant Staphylococcus aureus strain and a biofilm-producing methicillin-resistant Staphylococcus epidermidis strain.</title>
        <authorList>
            <person name="Gill S.R."/>
            <person name="Fouts D.E."/>
            <person name="Archer G.L."/>
            <person name="Mongodin E.F."/>
            <person name="DeBoy R.T."/>
            <person name="Ravel J."/>
            <person name="Paulsen I.T."/>
            <person name="Kolonay J.F."/>
            <person name="Brinkac L.M."/>
            <person name="Beanan M.J."/>
            <person name="Dodson R.J."/>
            <person name="Daugherty S.C."/>
            <person name="Madupu R."/>
            <person name="Angiuoli S.V."/>
            <person name="Durkin A.S."/>
            <person name="Haft D.H."/>
            <person name="Vamathevan J.J."/>
            <person name="Khouri H."/>
            <person name="Utterback T.R."/>
            <person name="Lee C."/>
            <person name="Dimitrov G."/>
            <person name="Jiang L."/>
            <person name="Qin H."/>
            <person name="Weidman J."/>
            <person name="Tran K."/>
            <person name="Kang K.H."/>
            <person name="Hance I.R."/>
            <person name="Nelson K.E."/>
            <person name="Fraser C.M."/>
        </authorList>
    </citation>
    <scope>NUCLEOTIDE SEQUENCE [LARGE SCALE GENOMIC DNA]</scope>
    <source>
        <strain>COL</strain>
    </source>
</reference>
<dbReference type="EC" id="5.1.3.9" evidence="1"/>
<dbReference type="EMBL" id="CP000046">
    <property type="protein sequence ID" value="AAW37522.1"/>
    <property type="molecule type" value="Genomic_DNA"/>
</dbReference>
<dbReference type="RefSeq" id="WP_000936720.1">
    <property type="nucleotide sequence ID" value="NZ_JBGOFO010000001.1"/>
</dbReference>
<dbReference type="SMR" id="Q5HJ50"/>
<dbReference type="KEGG" id="sac:SACOL0315"/>
<dbReference type="HOGENOM" id="CLU_086300_1_0_9"/>
<dbReference type="UniPathway" id="UPA00629">
    <property type="reaction ID" value="UER00682"/>
</dbReference>
<dbReference type="Proteomes" id="UP000000530">
    <property type="component" value="Chromosome"/>
</dbReference>
<dbReference type="GO" id="GO:0005829">
    <property type="term" value="C:cytosol"/>
    <property type="evidence" value="ECO:0007669"/>
    <property type="project" value="TreeGrafter"/>
</dbReference>
<dbReference type="GO" id="GO:0047465">
    <property type="term" value="F:N-acylglucosamine-6-phosphate 2-epimerase activity"/>
    <property type="evidence" value="ECO:0007669"/>
    <property type="project" value="UniProtKB-EC"/>
</dbReference>
<dbReference type="GO" id="GO:0005975">
    <property type="term" value="P:carbohydrate metabolic process"/>
    <property type="evidence" value="ECO:0007669"/>
    <property type="project" value="UniProtKB-UniRule"/>
</dbReference>
<dbReference type="GO" id="GO:0006053">
    <property type="term" value="P:N-acetylmannosamine catabolic process"/>
    <property type="evidence" value="ECO:0007669"/>
    <property type="project" value="TreeGrafter"/>
</dbReference>
<dbReference type="GO" id="GO:0019262">
    <property type="term" value="P:N-acetylneuraminate catabolic process"/>
    <property type="evidence" value="ECO:0007669"/>
    <property type="project" value="UniProtKB-UniRule"/>
</dbReference>
<dbReference type="CDD" id="cd04729">
    <property type="entry name" value="NanE"/>
    <property type="match status" value="1"/>
</dbReference>
<dbReference type="FunFam" id="3.20.20.70:FF:000035">
    <property type="entry name" value="Putative N-acetylmannosamine-6-phosphate 2-epimerase"/>
    <property type="match status" value="1"/>
</dbReference>
<dbReference type="Gene3D" id="3.20.20.70">
    <property type="entry name" value="Aldolase class I"/>
    <property type="match status" value="1"/>
</dbReference>
<dbReference type="HAMAP" id="MF_01235">
    <property type="entry name" value="ManNAc6P_epimer"/>
    <property type="match status" value="1"/>
</dbReference>
<dbReference type="InterPro" id="IPR013785">
    <property type="entry name" value="Aldolase_TIM"/>
</dbReference>
<dbReference type="InterPro" id="IPR007260">
    <property type="entry name" value="NanE"/>
</dbReference>
<dbReference type="InterPro" id="IPR011060">
    <property type="entry name" value="RibuloseP-bd_barrel"/>
</dbReference>
<dbReference type="NCBIfam" id="NF002231">
    <property type="entry name" value="PRK01130.1"/>
    <property type="match status" value="1"/>
</dbReference>
<dbReference type="PANTHER" id="PTHR36204">
    <property type="entry name" value="N-ACETYLMANNOSAMINE-6-PHOSPHATE 2-EPIMERASE-RELATED"/>
    <property type="match status" value="1"/>
</dbReference>
<dbReference type="PANTHER" id="PTHR36204:SF1">
    <property type="entry name" value="N-ACETYLMANNOSAMINE-6-PHOSPHATE 2-EPIMERASE-RELATED"/>
    <property type="match status" value="1"/>
</dbReference>
<dbReference type="Pfam" id="PF04131">
    <property type="entry name" value="NanE"/>
    <property type="match status" value="1"/>
</dbReference>
<dbReference type="SUPFAM" id="SSF51366">
    <property type="entry name" value="Ribulose-phoshate binding barrel"/>
    <property type="match status" value="1"/>
</dbReference>
<feature type="chain" id="PRO_0000179797" description="Putative N-acetylmannosamine-6-phosphate 2-epimerase">
    <location>
        <begin position="1"/>
        <end position="222"/>
    </location>
</feature>
<accession>Q5HJ50</accession>
<evidence type="ECO:0000255" key="1">
    <source>
        <dbReference type="HAMAP-Rule" id="MF_01235"/>
    </source>
</evidence>
<sequence length="222" mass="24545">MLPHGLIVSCQALPDEPLHSSFIMSKMALAAYEGGAVGIRANTKEDILAIKETVDLPVIGIVKRDYDHSDVFITATSKEVDELIESQCEVIALDATLQQRPKETLDELVSYIRTHAPNVEIMADIATVEEAKNAARLGFDYIGTTLHGYTSYTQGQLLYQNDFQFLKDVLQSVDAKVIAEGNVITPDMYKRVMDLGVHCSVVGGAITRPKEITKRFVQIMED</sequence>
<protein>
    <recommendedName>
        <fullName evidence="1">Putative N-acetylmannosamine-6-phosphate 2-epimerase</fullName>
        <ecNumber evidence="1">5.1.3.9</ecNumber>
    </recommendedName>
    <alternativeName>
        <fullName evidence="1">ManNAc-6-P epimerase</fullName>
    </alternativeName>
</protein>
<comment type="function">
    <text evidence="1">Converts N-acetylmannosamine-6-phosphate (ManNAc-6-P) to N-acetylglucosamine-6-phosphate (GlcNAc-6-P).</text>
</comment>
<comment type="catalytic activity">
    <reaction evidence="1">
        <text>an N-acyl-D-glucosamine 6-phosphate = an N-acyl-D-mannosamine 6-phosphate</text>
        <dbReference type="Rhea" id="RHEA:23932"/>
        <dbReference type="ChEBI" id="CHEBI:57599"/>
        <dbReference type="ChEBI" id="CHEBI:57666"/>
        <dbReference type="EC" id="5.1.3.9"/>
    </reaction>
</comment>
<comment type="pathway">
    <text evidence="1">Amino-sugar metabolism; N-acetylneuraminate degradation; D-fructose 6-phosphate from N-acetylneuraminate: step 3/5.</text>
</comment>
<comment type="similarity">
    <text evidence="1">Belongs to the NanE family.</text>
</comment>
<proteinExistence type="inferred from homology"/>
<keyword id="KW-0119">Carbohydrate metabolism</keyword>
<keyword id="KW-0413">Isomerase</keyword>
<organism>
    <name type="scientific">Staphylococcus aureus (strain COL)</name>
    <dbReference type="NCBI Taxonomy" id="93062"/>
    <lineage>
        <taxon>Bacteria</taxon>
        <taxon>Bacillati</taxon>
        <taxon>Bacillota</taxon>
        <taxon>Bacilli</taxon>
        <taxon>Bacillales</taxon>
        <taxon>Staphylococcaceae</taxon>
        <taxon>Staphylococcus</taxon>
    </lineage>
</organism>
<gene>
    <name evidence="1" type="primary">nanE</name>
    <name type="ordered locus">SACOL0315</name>
</gene>